<gene>
    <name evidence="1" type="primary">thiG</name>
    <name type="ordered locus">GM21_0666</name>
</gene>
<reference key="1">
    <citation type="submission" date="2009-07" db="EMBL/GenBank/DDBJ databases">
        <title>Complete sequence of Geobacter sp. M21.</title>
        <authorList>
            <consortium name="US DOE Joint Genome Institute"/>
            <person name="Lucas S."/>
            <person name="Copeland A."/>
            <person name="Lapidus A."/>
            <person name="Glavina del Rio T."/>
            <person name="Dalin E."/>
            <person name="Tice H."/>
            <person name="Bruce D."/>
            <person name="Goodwin L."/>
            <person name="Pitluck S."/>
            <person name="Saunders E."/>
            <person name="Brettin T."/>
            <person name="Detter J.C."/>
            <person name="Han C."/>
            <person name="Larimer F."/>
            <person name="Land M."/>
            <person name="Hauser L."/>
            <person name="Kyrpides N."/>
            <person name="Ovchinnikova G."/>
            <person name="Lovley D."/>
        </authorList>
    </citation>
    <scope>NUCLEOTIDE SEQUENCE [LARGE SCALE GENOMIC DNA]</scope>
    <source>
        <strain>M21</strain>
    </source>
</reference>
<name>THIG_GEOSM</name>
<evidence type="ECO:0000255" key="1">
    <source>
        <dbReference type="HAMAP-Rule" id="MF_00443"/>
    </source>
</evidence>
<proteinExistence type="inferred from homology"/>
<accession>C6E0C4</accession>
<dbReference type="EC" id="2.8.1.10" evidence="1"/>
<dbReference type="EMBL" id="CP001661">
    <property type="protein sequence ID" value="ACT16740.1"/>
    <property type="molecule type" value="Genomic_DNA"/>
</dbReference>
<dbReference type="SMR" id="C6E0C4"/>
<dbReference type="STRING" id="443144.GM21_0666"/>
<dbReference type="KEGG" id="gem:GM21_0666"/>
<dbReference type="eggNOG" id="COG2022">
    <property type="taxonomic scope" value="Bacteria"/>
</dbReference>
<dbReference type="HOGENOM" id="CLU_062233_1_0_7"/>
<dbReference type="OrthoDB" id="9805935at2"/>
<dbReference type="UniPathway" id="UPA00060"/>
<dbReference type="GO" id="GO:0005737">
    <property type="term" value="C:cytoplasm"/>
    <property type="evidence" value="ECO:0007669"/>
    <property type="project" value="UniProtKB-SubCell"/>
</dbReference>
<dbReference type="GO" id="GO:1990107">
    <property type="term" value="F:thiazole synthase activity"/>
    <property type="evidence" value="ECO:0007669"/>
    <property type="project" value="UniProtKB-EC"/>
</dbReference>
<dbReference type="GO" id="GO:0009229">
    <property type="term" value="P:thiamine diphosphate biosynthetic process"/>
    <property type="evidence" value="ECO:0007669"/>
    <property type="project" value="UniProtKB-UniRule"/>
</dbReference>
<dbReference type="CDD" id="cd04728">
    <property type="entry name" value="ThiG"/>
    <property type="match status" value="1"/>
</dbReference>
<dbReference type="FunFam" id="3.20.20.70:FF:000049">
    <property type="entry name" value="Thiazole synthase"/>
    <property type="match status" value="1"/>
</dbReference>
<dbReference type="Gene3D" id="3.20.20.70">
    <property type="entry name" value="Aldolase class I"/>
    <property type="match status" value="1"/>
</dbReference>
<dbReference type="HAMAP" id="MF_00443">
    <property type="entry name" value="ThiG"/>
    <property type="match status" value="1"/>
</dbReference>
<dbReference type="InterPro" id="IPR013785">
    <property type="entry name" value="Aldolase_TIM"/>
</dbReference>
<dbReference type="InterPro" id="IPR033983">
    <property type="entry name" value="Thiazole_synthase_ThiG"/>
</dbReference>
<dbReference type="InterPro" id="IPR008867">
    <property type="entry name" value="ThiG"/>
</dbReference>
<dbReference type="PANTHER" id="PTHR34266">
    <property type="entry name" value="THIAZOLE SYNTHASE"/>
    <property type="match status" value="1"/>
</dbReference>
<dbReference type="PANTHER" id="PTHR34266:SF2">
    <property type="entry name" value="THIAZOLE SYNTHASE"/>
    <property type="match status" value="1"/>
</dbReference>
<dbReference type="Pfam" id="PF05690">
    <property type="entry name" value="ThiG"/>
    <property type="match status" value="1"/>
</dbReference>
<dbReference type="SUPFAM" id="SSF110399">
    <property type="entry name" value="ThiG-like"/>
    <property type="match status" value="1"/>
</dbReference>
<protein>
    <recommendedName>
        <fullName evidence="1">Thiazole synthase</fullName>
        <ecNumber evidence="1">2.8.1.10</ecNumber>
    </recommendedName>
</protein>
<keyword id="KW-0963">Cytoplasm</keyword>
<keyword id="KW-0704">Schiff base</keyword>
<keyword id="KW-0784">Thiamine biosynthesis</keyword>
<keyword id="KW-0808">Transferase</keyword>
<organism>
    <name type="scientific">Geobacter sp. (strain M21)</name>
    <dbReference type="NCBI Taxonomy" id="443144"/>
    <lineage>
        <taxon>Bacteria</taxon>
        <taxon>Pseudomonadati</taxon>
        <taxon>Thermodesulfobacteriota</taxon>
        <taxon>Desulfuromonadia</taxon>
        <taxon>Geobacterales</taxon>
        <taxon>Geobacteraceae</taxon>
        <taxon>Geobacter</taxon>
    </lineage>
</organism>
<sequence>MTQTNDKLVIAGREFDSRLMVGTGKYADFQQMVRAIEVSGAQIITVAVRRVNISDRGKESLLDHIDLKKYTLLPNTAGCYTAEDAIRTCRLAREAGLSDFVKLEVLGDEKTLYPNNEELLKAAKVLLAEGFTVLPYTSDDPIVCRRLEDMGCAAVMPLGAPIGSGLGIRNPYNIQIILESVKVPVIVDAGVGTASDAAIAMELGCHGVLMNTAIAGAKDPVAMAEAMNCAVRAGRLAYLAGRIPRKLYASASSPLTGIIG</sequence>
<comment type="function">
    <text evidence="1">Catalyzes the rearrangement of 1-deoxy-D-xylulose 5-phosphate (DXP) to produce the thiazole phosphate moiety of thiamine. Sulfur is provided by the thiocarboxylate moiety of the carrier protein ThiS. In vitro, sulfur can be provided by H(2)S.</text>
</comment>
<comment type="catalytic activity">
    <reaction evidence="1">
        <text>[ThiS sulfur-carrier protein]-C-terminal-Gly-aminoethanethioate + 2-iminoacetate + 1-deoxy-D-xylulose 5-phosphate = [ThiS sulfur-carrier protein]-C-terminal Gly-Gly + 2-[(2R,5Z)-2-carboxy-4-methylthiazol-5(2H)-ylidene]ethyl phosphate + 2 H2O + H(+)</text>
        <dbReference type="Rhea" id="RHEA:26297"/>
        <dbReference type="Rhea" id="RHEA-COMP:12909"/>
        <dbReference type="Rhea" id="RHEA-COMP:19908"/>
        <dbReference type="ChEBI" id="CHEBI:15377"/>
        <dbReference type="ChEBI" id="CHEBI:15378"/>
        <dbReference type="ChEBI" id="CHEBI:57792"/>
        <dbReference type="ChEBI" id="CHEBI:62899"/>
        <dbReference type="ChEBI" id="CHEBI:77846"/>
        <dbReference type="ChEBI" id="CHEBI:90778"/>
        <dbReference type="ChEBI" id="CHEBI:232372"/>
        <dbReference type="EC" id="2.8.1.10"/>
    </reaction>
</comment>
<comment type="pathway">
    <text evidence="1">Cofactor biosynthesis; thiamine diphosphate biosynthesis.</text>
</comment>
<comment type="subunit">
    <text evidence="1">Homotetramer. Forms heterodimers with either ThiH or ThiS.</text>
</comment>
<comment type="subcellular location">
    <subcellularLocation>
        <location evidence="1">Cytoplasm</location>
    </subcellularLocation>
</comment>
<comment type="similarity">
    <text evidence="1">Belongs to the ThiG family.</text>
</comment>
<feature type="chain" id="PRO_1000206133" description="Thiazole synthase">
    <location>
        <begin position="1"/>
        <end position="260"/>
    </location>
</feature>
<feature type="active site" description="Schiff-base intermediate with DXP" evidence="1">
    <location>
        <position position="102"/>
    </location>
</feature>
<feature type="binding site" evidence="1">
    <location>
        <position position="163"/>
    </location>
    <ligand>
        <name>1-deoxy-D-xylulose 5-phosphate</name>
        <dbReference type="ChEBI" id="CHEBI:57792"/>
    </ligand>
</feature>
<feature type="binding site" evidence="1">
    <location>
        <begin position="189"/>
        <end position="190"/>
    </location>
    <ligand>
        <name>1-deoxy-D-xylulose 5-phosphate</name>
        <dbReference type="ChEBI" id="CHEBI:57792"/>
    </ligand>
</feature>
<feature type="binding site" evidence="1">
    <location>
        <begin position="211"/>
        <end position="212"/>
    </location>
    <ligand>
        <name>1-deoxy-D-xylulose 5-phosphate</name>
        <dbReference type="ChEBI" id="CHEBI:57792"/>
    </ligand>
</feature>